<protein>
    <recommendedName>
        <fullName evidence="1">5'-nucleotidase SurE</fullName>
        <ecNumber evidence="1">3.1.3.5</ecNumber>
    </recommendedName>
    <alternativeName>
        <fullName evidence="1">Nucleoside 5'-monophosphate phosphohydrolase</fullName>
    </alternativeName>
</protein>
<sequence length="255" mass="28519">MNILVTNDDGVTADGILCLARTLSKKYKVTVVAPETEQSAVGHAITLRLPLWLRKLDINENFEIYSVSGTPADCVKMGIDVVLGEKPDLLISGINRGNNLGTDVVYSGTVSGALEGAIAGVPSIAVSSYSFENPMYETAAKFILDFLEEFDVRSIPRFTALNINVPSVPYDQIKGWKLTRQSKRMYDDYFEKRVDPSGGNYYWMMGTIIEDDPDPKADYKAIAENYVSVTPISVFLTNEEYLKRLEERYEDKTIR</sequence>
<evidence type="ECO:0000255" key="1">
    <source>
        <dbReference type="HAMAP-Rule" id="MF_00060"/>
    </source>
</evidence>
<accession>B7IH68</accession>
<proteinExistence type="inferred from homology"/>
<keyword id="KW-0963">Cytoplasm</keyword>
<keyword id="KW-0378">Hydrolase</keyword>
<keyword id="KW-0479">Metal-binding</keyword>
<keyword id="KW-0547">Nucleotide-binding</keyword>
<keyword id="KW-1185">Reference proteome</keyword>
<reference key="1">
    <citation type="journal article" date="2009" name="J. Bacteriol.">
        <title>The genome of Thermosipho africanus TCF52B: lateral genetic connections to the Firmicutes and Archaea.</title>
        <authorList>
            <person name="Nesboe C.L."/>
            <person name="Bapteste E."/>
            <person name="Curtis B."/>
            <person name="Dahle H."/>
            <person name="Lopez P."/>
            <person name="Macleod D."/>
            <person name="Dlutek M."/>
            <person name="Bowman S."/>
            <person name="Zhaxybayeva O."/>
            <person name="Birkeland N.-K."/>
            <person name="Doolittle W.F."/>
        </authorList>
    </citation>
    <scope>NUCLEOTIDE SEQUENCE [LARGE SCALE GENOMIC DNA]</scope>
    <source>
        <strain>TCF52B</strain>
    </source>
</reference>
<dbReference type="EC" id="3.1.3.5" evidence="1"/>
<dbReference type="EMBL" id="CP001185">
    <property type="protein sequence ID" value="ACJ75432.1"/>
    <property type="molecule type" value="Genomic_DNA"/>
</dbReference>
<dbReference type="RefSeq" id="WP_004100941.1">
    <property type="nucleotide sequence ID" value="NC_011653.1"/>
</dbReference>
<dbReference type="SMR" id="B7IH68"/>
<dbReference type="STRING" id="484019.THA_973"/>
<dbReference type="KEGG" id="taf:THA_973"/>
<dbReference type="eggNOG" id="COG0496">
    <property type="taxonomic scope" value="Bacteria"/>
</dbReference>
<dbReference type="HOGENOM" id="CLU_045192_1_3_0"/>
<dbReference type="OrthoDB" id="9780815at2"/>
<dbReference type="Proteomes" id="UP000002453">
    <property type="component" value="Chromosome"/>
</dbReference>
<dbReference type="GO" id="GO:0005737">
    <property type="term" value="C:cytoplasm"/>
    <property type="evidence" value="ECO:0007669"/>
    <property type="project" value="UniProtKB-SubCell"/>
</dbReference>
<dbReference type="GO" id="GO:0008254">
    <property type="term" value="F:3'-nucleotidase activity"/>
    <property type="evidence" value="ECO:0007669"/>
    <property type="project" value="TreeGrafter"/>
</dbReference>
<dbReference type="GO" id="GO:0008253">
    <property type="term" value="F:5'-nucleotidase activity"/>
    <property type="evidence" value="ECO:0007669"/>
    <property type="project" value="UniProtKB-UniRule"/>
</dbReference>
<dbReference type="GO" id="GO:0004309">
    <property type="term" value="F:exopolyphosphatase activity"/>
    <property type="evidence" value="ECO:0007669"/>
    <property type="project" value="TreeGrafter"/>
</dbReference>
<dbReference type="GO" id="GO:0046872">
    <property type="term" value="F:metal ion binding"/>
    <property type="evidence" value="ECO:0007669"/>
    <property type="project" value="UniProtKB-UniRule"/>
</dbReference>
<dbReference type="GO" id="GO:0000166">
    <property type="term" value="F:nucleotide binding"/>
    <property type="evidence" value="ECO:0007669"/>
    <property type="project" value="UniProtKB-KW"/>
</dbReference>
<dbReference type="FunFam" id="3.40.1210.10:FF:000001">
    <property type="entry name" value="5'/3'-nucleotidase SurE"/>
    <property type="match status" value="1"/>
</dbReference>
<dbReference type="Gene3D" id="3.40.1210.10">
    <property type="entry name" value="Survival protein SurE-like phosphatase/nucleotidase"/>
    <property type="match status" value="1"/>
</dbReference>
<dbReference type="HAMAP" id="MF_00060">
    <property type="entry name" value="SurE"/>
    <property type="match status" value="1"/>
</dbReference>
<dbReference type="InterPro" id="IPR030048">
    <property type="entry name" value="SurE"/>
</dbReference>
<dbReference type="InterPro" id="IPR002828">
    <property type="entry name" value="SurE-like_Pase/nucleotidase"/>
</dbReference>
<dbReference type="InterPro" id="IPR036523">
    <property type="entry name" value="SurE-like_sf"/>
</dbReference>
<dbReference type="NCBIfam" id="NF001490">
    <property type="entry name" value="PRK00346.1-4"/>
    <property type="match status" value="1"/>
</dbReference>
<dbReference type="NCBIfam" id="NF001492">
    <property type="entry name" value="PRK00346.2-2"/>
    <property type="match status" value="1"/>
</dbReference>
<dbReference type="NCBIfam" id="NF010545">
    <property type="entry name" value="PRK13935.1"/>
    <property type="match status" value="1"/>
</dbReference>
<dbReference type="NCBIfam" id="TIGR00087">
    <property type="entry name" value="surE"/>
    <property type="match status" value="1"/>
</dbReference>
<dbReference type="PANTHER" id="PTHR30457">
    <property type="entry name" value="5'-NUCLEOTIDASE SURE"/>
    <property type="match status" value="1"/>
</dbReference>
<dbReference type="PANTHER" id="PTHR30457:SF12">
    <property type="entry name" value="5'_3'-NUCLEOTIDASE SURE"/>
    <property type="match status" value="1"/>
</dbReference>
<dbReference type="Pfam" id="PF01975">
    <property type="entry name" value="SurE"/>
    <property type="match status" value="1"/>
</dbReference>
<dbReference type="SUPFAM" id="SSF64167">
    <property type="entry name" value="SurE-like"/>
    <property type="match status" value="1"/>
</dbReference>
<comment type="function">
    <text evidence="1">Nucleotidase that shows phosphatase activity on nucleoside 5'-monophosphates.</text>
</comment>
<comment type="catalytic activity">
    <reaction evidence="1">
        <text>a ribonucleoside 5'-phosphate + H2O = a ribonucleoside + phosphate</text>
        <dbReference type="Rhea" id="RHEA:12484"/>
        <dbReference type="ChEBI" id="CHEBI:15377"/>
        <dbReference type="ChEBI" id="CHEBI:18254"/>
        <dbReference type="ChEBI" id="CHEBI:43474"/>
        <dbReference type="ChEBI" id="CHEBI:58043"/>
        <dbReference type="EC" id="3.1.3.5"/>
    </reaction>
</comment>
<comment type="cofactor">
    <cofactor evidence="1">
        <name>a divalent metal cation</name>
        <dbReference type="ChEBI" id="CHEBI:60240"/>
    </cofactor>
    <text evidence="1">Binds 1 divalent metal cation per subunit.</text>
</comment>
<comment type="subcellular location">
    <subcellularLocation>
        <location evidence="1">Cytoplasm</location>
    </subcellularLocation>
</comment>
<comment type="similarity">
    <text evidence="1">Belongs to the SurE nucleotidase family.</text>
</comment>
<feature type="chain" id="PRO_1000196616" description="5'-nucleotidase SurE">
    <location>
        <begin position="1"/>
        <end position="255"/>
    </location>
</feature>
<feature type="binding site" evidence="1">
    <location>
        <position position="8"/>
    </location>
    <ligand>
        <name>a divalent metal cation</name>
        <dbReference type="ChEBI" id="CHEBI:60240"/>
    </ligand>
</feature>
<feature type="binding site" evidence="1">
    <location>
        <position position="9"/>
    </location>
    <ligand>
        <name>a divalent metal cation</name>
        <dbReference type="ChEBI" id="CHEBI:60240"/>
    </ligand>
</feature>
<feature type="binding site" evidence="1">
    <location>
        <position position="39"/>
    </location>
    <ligand>
        <name>a divalent metal cation</name>
        <dbReference type="ChEBI" id="CHEBI:60240"/>
    </ligand>
</feature>
<feature type="binding site" evidence="1">
    <location>
        <position position="95"/>
    </location>
    <ligand>
        <name>a divalent metal cation</name>
        <dbReference type="ChEBI" id="CHEBI:60240"/>
    </ligand>
</feature>
<name>SURE_THEAB</name>
<gene>
    <name evidence="1" type="primary">surE</name>
    <name type="ordered locus">THA_973</name>
</gene>
<organism>
    <name type="scientific">Thermosipho africanus (strain TCF52B)</name>
    <dbReference type="NCBI Taxonomy" id="484019"/>
    <lineage>
        <taxon>Bacteria</taxon>
        <taxon>Thermotogati</taxon>
        <taxon>Thermotogota</taxon>
        <taxon>Thermotogae</taxon>
        <taxon>Thermotogales</taxon>
        <taxon>Fervidobacteriaceae</taxon>
        <taxon>Thermosipho</taxon>
    </lineage>
</organism>